<comment type="similarity">
    <text evidence="2">Belongs to the UPF0337 (CsbD) family.</text>
</comment>
<organism>
    <name type="scientific">Staphylococcus aureus (strain NCTC 8325 / PS 47)</name>
    <dbReference type="NCBI Taxonomy" id="93061"/>
    <lineage>
        <taxon>Bacteria</taxon>
        <taxon>Bacillati</taxon>
        <taxon>Bacillota</taxon>
        <taxon>Bacilli</taxon>
        <taxon>Bacillales</taxon>
        <taxon>Staphylococcaceae</taxon>
        <taxon>Staphylococcus</taxon>
    </lineage>
</organism>
<reference key="1">
    <citation type="book" date="2006" name="Gram positive pathogens, 2nd edition">
        <title>The Staphylococcus aureus NCTC 8325 genome.</title>
        <editorList>
            <person name="Fischetti V."/>
            <person name="Novick R."/>
            <person name="Ferretti J."/>
            <person name="Portnoy D."/>
            <person name="Rood J."/>
        </editorList>
        <authorList>
            <person name="Gillaspy A.F."/>
            <person name="Worrell V."/>
            <person name="Orvis J."/>
            <person name="Roe B.A."/>
            <person name="Dyer D.W."/>
            <person name="Iandolo J.J."/>
        </authorList>
    </citation>
    <scope>NUCLEOTIDE SEQUENCE [LARGE SCALE GENOMIC DNA]</scope>
    <source>
        <strain>NCTC 8325 / PS 47</strain>
    </source>
</reference>
<sequence>MADESKFEQAKGNVKETVGNVTDNKNLENEGKEDKASGKAKEFVENAKEKATDFIDKVKGNKGE</sequence>
<keyword id="KW-1185">Reference proteome</keyword>
<gene>
    <name type="ordered locus">SAOUHSC_00845</name>
</gene>
<evidence type="ECO:0000256" key="1">
    <source>
        <dbReference type="SAM" id="MobiDB-lite"/>
    </source>
</evidence>
<evidence type="ECO:0000305" key="2"/>
<accession>Q2FZY9</accession>
<protein>
    <recommendedName>
        <fullName>UPF0337 protein SAOUHSC_00845</fullName>
    </recommendedName>
</protein>
<name>Y845_STAA8</name>
<proteinExistence type="inferred from homology"/>
<dbReference type="EMBL" id="CP000253">
    <property type="protein sequence ID" value="ABD29971.1"/>
    <property type="molecule type" value="Genomic_DNA"/>
</dbReference>
<dbReference type="RefSeq" id="WP_000752917.1">
    <property type="nucleotide sequence ID" value="NZ_LS483365.1"/>
</dbReference>
<dbReference type="RefSeq" id="YP_499399.1">
    <property type="nucleotide sequence ID" value="NC_007795.1"/>
</dbReference>
<dbReference type="SMR" id="Q2FZY9"/>
<dbReference type="STRING" id="93061.SAOUHSC_00845"/>
<dbReference type="PaxDb" id="1280-SAXN108_0907"/>
<dbReference type="GeneID" id="3918957"/>
<dbReference type="KEGG" id="sao:SAOUHSC_00845"/>
<dbReference type="PATRIC" id="fig|93061.5.peg.768"/>
<dbReference type="eggNOG" id="COG3237">
    <property type="taxonomic scope" value="Bacteria"/>
</dbReference>
<dbReference type="HOGENOM" id="CLU_135567_0_3_9"/>
<dbReference type="OrthoDB" id="2134937at2"/>
<dbReference type="PRO" id="PR:Q2FZY9"/>
<dbReference type="Proteomes" id="UP000008816">
    <property type="component" value="Chromosome"/>
</dbReference>
<dbReference type="Gene3D" id="1.10.1470.10">
    <property type="entry name" value="YjbJ"/>
    <property type="match status" value="1"/>
</dbReference>
<dbReference type="InterPro" id="IPR008462">
    <property type="entry name" value="CsbD"/>
</dbReference>
<dbReference type="InterPro" id="IPR050423">
    <property type="entry name" value="UPF0337_stress_rsp"/>
</dbReference>
<dbReference type="InterPro" id="IPR036629">
    <property type="entry name" value="YjbJ_sf"/>
</dbReference>
<dbReference type="PANTHER" id="PTHR34977">
    <property type="entry name" value="UPF0337 PROTEIN YJBJ"/>
    <property type="match status" value="1"/>
</dbReference>
<dbReference type="PANTHER" id="PTHR34977:SF1">
    <property type="entry name" value="UPF0337 PROTEIN YJBJ"/>
    <property type="match status" value="1"/>
</dbReference>
<dbReference type="Pfam" id="PF05532">
    <property type="entry name" value="CsbD"/>
    <property type="match status" value="1"/>
</dbReference>
<dbReference type="SUPFAM" id="SSF69047">
    <property type="entry name" value="Hypothetical protein YjbJ"/>
    <property type="match status" value="1"/>
</dbReference>
<feature type="chain" id="PRO_0000272679" description="UPF0337 protein SAOUHSC_00845">
    <location>
        <begin position="1"/>
        <end position="64"/>
    </location>
</feature>
<feature type="region of interest" description="Disordered" evidence="1">
    <location>
        <begin position="1"/>
        <end position="40"/>
    </location>
</feature>
<feature type="compositionally biased region" description="Basic and acidic residues" evidence="1">
    <location>
        <begin position="25"/>
        <end position="40"/>
    </location>
</feature>